<comment type="function">
    <text evidence="1">Component of the acetyl coenzyme A carboxylase (ACC) complex. Biotin carboxylase (BC) catalyzes the carboxylation of biotin on its carrier protein (BCCP) and then the CO(2) group is transferred by the transcarboxylase to acetyl-CoA to form malonyl-CoA (By similarity).</text>
</comment>
<comment type="catalytic activity">
    <reaction>
        <text>N(6)-carboxybiotinyl-L-lysyl-[protein] + acetyl-CoA = N(6)-biotinyl-L-lysyl-[protein] + malonyl-CoA</text>
        <dbReference type="Rhea" id="RHEA:54728"/>
        <dbReference type="Rhea" id="RHEA-COMP:10505"/>
        <dbReference type="Rhea" id="RHEA-COMP:10506"/>
        <dbReference type="ChEBI" id="CHEBI:57288"/>
        <dbReference type="ChEBI" id="CHEBI:57384"/>
        <dbReference type="ChEBI" id="CHEBI:83144"/>
        <dbReference type="ChEBI" id="CHEBI:83145"/>
        <dbReference type="EC" id="2.1.3.15"/>
    </reaction>
</comment>
<comment type="cofactor">
    <cofactor evidence="1">
        <name>Zn(2+)</name>
        <dbReference type="ChEBI" id="CHEBI:29105"/>
    </cofactor>
    <text evidence="1">Binds 1 zinc ion per subunit.</text>
</comment>
<comment type="pathway">
    <text>Lipid metabolism; malonyl-CoA biosynthesis; malonyl-CoA from acetyl-CoA: step 1/1.</text>
</comment>
<comment type="subunit">
    <text evidence="1">Acetyl-CoA carboxylase is a heterotetramer composed of biotin carboxyl carrier protein (AccB), biotin carboxylase (AccC) and two subunits of ACCase subunit beta/alpha.</text>
</comment>
<comment type="subcellular location">
    <subcellularLocation>
        <location evidence="1">Cytoplasm</location>
    </subcellularLocation>
</comment>
<comment type="similarity">
    <text evidence="6">In the N-terminal section; belongs to the AccD/PCCB family.</text>
</comment>
<comment type="similarity">
    <text evidence="6">In the C-terminal section; belongs to the AccA family.</text>
</comment>
<proteinExistence type="inferred from homology"/>
<dbReference type="EC" id="2.1.3.15"/>
<dbReference type="EMBL" id="AE015927">
    <property type="protein sequence ID" value="AAO34787.1"/>
    <property type="molecule type" value="Genomic_DNA"/>
</dbReference>
<dbReference type="RefSeq" id="WP_011098459.1">
    <property type="nucleotide sequence ID" value="NC_004557.1"/>
</dbReference>
<dbReference type="SMR" id="Q899N5"/>
<dbReference type="STRING" id="212717.CTC_00135"/>
<dbReference type="GeneID" id="24253928"/>
<dbReference type="KEGG" id="ctc:CTC_00135"/>
<dbReference type="HOGENOM" id="CLU_015486_3_1_9"/>
<dbReference type="OrthoDB" id="9772975at2"/>
<dbReference type="UniPathway" id="UPA00655">
    <property type="reaction ID" value="UER00711"/>
</dbReference>
<dbReference type="Proteomes" id="UP000001412">
    <property type="component" value="Chromosome"/>
</dbReference>
<dbReference type="GO" id="GO:0009317">
    <property type="term" value="C:acetyl-CoA carboxylase complex"/>
    <property type="evidence" value="ECO:0007669"/>
    <property type="project" value="InterPro"/>
</dbReference>
<dbReference type="GO" id="GO:0003989">
    <property type="term" value="F:acetyl-CoA carboxylase activity"/>
    <property type="evidence" value="ECO:0007669"/>
    <property type="project" value="InterPro"/>
</dbReference>
<dbReference type="GO" id="GO:0005524">
    <property type="term" value="F:ATP binding"/>
    <property type="evidence" value="ECO:0007669"/>
    <property type="project" value="UniProtKB-KW"/>
</dbReference>
<dbReference type="GO" id="GO:0016743">
    <property type="term" value="F:carboxyl- or carbamoyltransferase activity"/>
    <property type="evidence" value="ECO:0007669"/>
    <property type="project" value="UniProtKB-UniRule"/>
</dbReference>
<dbReference type="GO" id="GO:0008270">
    <property type="term" value="F:zinc ion binding"/>
    <property type="evidence" value="ECO:0007669"/>
    <property type="project" value="UniProtKB-UniRule"/>
</dbReference>
<dbReference type="GO" id="GO:0006633">
    <property type="term" value="P:fatty acid biosynthetic process"/>
    <property type="evidence" value="ECO:0007669"/>
    <property type="project" value="UniProtKB-KW"/>
</dbReference>
<dbReference type="GO" id="GO:2001295">
    <property type="term" value="P:malonyl-CoA biosynthetic process"/>
    <property type="evidence" value="ECO:0007669"/>
    <property type="project" value="UniProtKB-UniRule"/>
</dbReference>
<dbReference type="Gene3D" id="3.90.226.10">
    <property type="entry name" value="2-enoyl-CoA Hydratase, Chain A, domain 1"/>
    <property type="match status" value="2"/>
</dbReference>
<dbReference type="HAMAP" id="MF_00823">
    <property type="entry name" value="AcetylCoA_CT_alpha"/>
    <property type="match status" value="1"/>
</dbReference>
<dbReference type="HAMAP" id="MF_01395">
    <property type="entry name" value="AcetylCoA_CT_beta"/>
    <property type="match status" value="1"/>
</dbReference>
<dbReference type="InterPro" id="IPR001095">
    <property type="entry name" value="Acetyl_CoA_COase_a_su"/>
</dbReference>
<dbReference type="InterPro" id="IPR000438">
    <property type="entry name" value="Acetyl_CoA_COase_Trfase_b_su"/>
</dbReference>
<dbReference type="InterPro" id="IPR029045">
    <property type="entry name" value="ClpP/crotonase-like_dom_sf"/>
</dbReference>
<dbReference type="InterPro" id="IPR011763">
    <property type="entry name" value="COA_CT_C"/>
</dbReference>
<dbReference type="InterPro" id="IPR011762">
    <property type="entry name" value="COA_CT_N"/>
</dbReference>
<dbReference type="InterPro" id="IPR041010">
    <property type="entry name" value="Znf-ACC"/>
</dbReference>
<dbReference type="NCBIfam" id="TIGR00513">
    <property type="entry name" value="accA"/>
    <property type="match status" value="1"/>
</dbReference>
<dbReference type="NCBIfam" id="NF041504">
    <property type="entry name" value="AccA_sub"/>
    <property type="match status" value="1"/>
</dbReference>
<dbReference type="NCBIfam" id="TIGR00515">
    <property type="entry name" value="accD"/>
    <property type="match status" value="1"/>
</dbReference>
<dbReference type="NCBIfam" id="NF004344">
    <property type="entry name" value="PRK05724.1"/>
    <property type="match status" value="1"/>
</dbReference>
<dbReference type="PANTHER" id="PTHR42853">
    <property type="entry name" value="ACETYL-COENZYME A CARBOXYLASE CARBOXYL TRANSFERASE SUBUNIT ALPHA"/>
    <property type="match status" value="1"/>
</dbReference>
<dbReference type="PANTHER" id="PTHR42853:SF3">
    <property type="entry name" value="ACETYL-COENZYME A CARBOXYLASE CARBOXYL TRANSFERASE SUBUNIT ALPHA, CHLOROPLASTIC"/>
    <property type="match status" value="1"/>
</dbReference>
<dbReference type="Pfam" id="PF03255">
    <property type="entry name" value="ACCA"/>
    <property type="match status" value="1"/>
</dbReference>
<dbReference type="Pfam" id="PF17848">
    <property type="entry name" value="Zn_ribbon_ACC"/>
    <property type="match status" value="1"/>
</dbReference>
<dbReference type="PRINTS" id="PR01069">
    <property type="entry name" value="ACCCTRFRASEA"/>
</dbReference>
<dbReference type="SUPFAM" id="SSF52096">
    <property type="entry name" value="ClpP/crotonase"/>
    <property type="match status" value="2"/>
</dbReference>
<dbReference type="PROSITE" id="PS50989">
    <property type="entry name" value="COA_CT_CTER"/>
    <property type="match status" value="1"/>
</dbReference>
<dbReference type="PROSITE" id="PS50980">
    <property type="entry name" value="COA_CT_NTER"/>
    <property type="match status" value="1"/>
</dbReference>
<reference key="1">
    <citation type="journal article" date="2003" name="Proc. Natl. Acad. Sci. U.S.A.">
        <title>The genome sequence of Clostridium tetani, the causative agent of tetanus disease.</title>
        <authorList>
            <person name="Brueggemann H."/>
            <person name="Baeumer S."/>
            <person name="Fricke W.F."/>
            <person name="Wiezer A."/>
            <person name="Liesegang H."/>
            <person name="Decker I."/>
            <person name="Herzberg C."/>
            <person name="Martinez-Arias R."/>
            <person name="Merkl R."/>
            <person name="Henne A."/>
            <person name="Gottschalk G."/>
        </authorList>
    </citation>
    <scope>NUCLEOTIDE SEQUENCE [LARGE SCALE GENOMIC DNA]</scope>
    <source>
        <strain>Massachusetts / E88</strain>
    </source>
</reference>
<protein>
    <recommendedName>
        <fullName>Acetyl-coenzyme A carboxylase carboxyl transferase subunits beta/alpha</fullName>
        <shortName>ACCase subunits beta/alpha</shortName>
        <shortName>Acetyl-CoA carboxylase carboxyltransferase subunits beta/alpha</shortName>
        <ecNumber>2.1.3.15</ecNumber>
    </recommendedName>
</protein>
<keyword id="KW-0067">ATP-binding</keyword>
<keyword id="KW-0963">Cytoplasm</keyword>
<keyword id="KW-0275">Fatty acid biosynthesis</keyword>
<keyword id="KW-0276">Fatty acid metabolism</keyword>
<keyword id="KW-0444">Lipid biosynthesis</keyword>
<keyword id="KW-0443">Lipid metabolism</keyword>
<keyword id="KW-0479">Metal-binding</keyword>
<keyword id="KW-0547">Nucleotide-binding</keyword>
<keyword id="KW-1185">Reference proteome</keyword>
<keyword id="KW-0808">Transferase</keyword>
<keyword id="KW-0862">Zinc</keyword>
<keyword id="KW-0863">Zinc-finger</keyword>
<gene>
    <name type="primary">accD</name>
    <name type="synonym">accA</name>
    <name type="synonym">accDA</name>
    <name type="ordered locus">CTC_00135</name>
</gene>
<organism>
    <name type="scientific">Clostridium tetani (strain Massachusetts / E88)</name>
    <dbReference type="NCBI Taxonomy" id="212717"/>
    <lineage>
        <taxon>Bacteria</taxon>
        <taxon>Bacillati</taxon>
        <taxon>Bacillota</taxon>
        <taxon>Clostridia</taxon>
        <taxon>Eubacteriales</taxon>
        <taxon>Clostridiaceae</taxon>
        <taxon>Clostridium</taxon>
    </lineage>
</organism>
<name>ACCDA_CLOTE</name>
<feature type="chain" id="PRO_0000359113" description="Acetyl-coenzyme A carboxylase carboxyl transferase subunits beta/alpha">
    <location>
        <begin position="1"/>
        <end position="575"/>
    </location>
</feature>
<feature type="domain" description="CoA carboxyltransferase N-terminal" evidence="3">
    <location>
        <begin position="35"/>
        <end position="301"/>
    </location>
</feature>
<feature type="domain" description="CoA carboxyltransferase C-terminal" evidence="4">
    <location>
        <begin position="295"/>
        <end position="548"/>
    </location>
</feature>
<feature type="zinc finger region" description="C4-type" evidence="2">
    <location>
        <begin position="39"/>
        <end position="61"/>
    </location>
</feature>
<feature type="region of interest" description="Acetyl-coenzyme A carboxylase carboxyl transferase subunit beta">
    <location>
        <begin position="1"/>
        <end position="264"/>
    </location>
</feature>
<feature type="region of interest" description="Carboxyltransferase" evidence="5">
    <location>
        <begin position="35"/>
        <end position="548"/>
    </location>
</feature>
<feature type="region of interest" description="Acetyl-coenzyme A carboxylase carboxyl transferase subunit alpha">
    <location>
        <begin position="265"/>
        <end position="571"/>
    </location>
</feature>
<feature type="binding site" evidence="1">
    <location>
        <position position="39"/>
    </location>
    <ligand>
        <name>Zn(2+)</name>
        <dbReference type="ChEBI" id="CHEBI:29105"/>
    </ligand>
</feature>
<feature type="binding site" evidence="1">
    <location>
        <position position="42"/>
    </location>
    <ligand>
        <name>Zn(2+)</name>
        <dbReference type="ChEBI" id="CHEBI:29105"/>
    </ligand>
</feature>
<feature type="binding site" evidence="1">
    <location>
        <position position="58"/>
    </location>
    <ligand>
        <name>Zn(2+)</name>
        <dbReference type="ChEBI" id="CHEBI:29105"/>
    </ligand>
</feature>
<feature type="binding site" evidence="1">
    <location>
        <position position="61"/>
    </location>
    <ligand>
        <name>Zn(2+)</name>
        <dbReference type="ChEBI" id="CHEBI:29105"/>
    </ligand>
</feature>
<accession>Q899N5</accession>
<sequence length="575" mass="64630">MFKRLFKKTKYITVSSHNLNEKDTTLEKPLIPDCMWSKCEKCGQIIYSKDLRKNHSICGFCKNHFRISAYDRVKQIIDEGTWAEMDKNLCSVNPLNFKGYNDKIEKAQEKTDLNEAVITGVGSIKGEKTVICIMDSRFFMGSMGSVVGEKITRSIEKSIENRLPLVIFTASGGARMQEGMFSLMQMAKISAALSKLSQAGLLYITVLTDPTTGGVTASFAMLGDIILSEPGALIGFAGKRVIEQTINKKLPKGFQTAEFLMKHGFIDKIVNRKNLKDTLSMILKLHREKCEFKSYKDITVNKVNTLKNKLDAWGKLSMARNEKRPTSLDYIDNIFENFMEFHGDRYYGNDSCIVGGIGILDGVPVTIIAQQKGRDLNENIERNFGMPNPEGYRKALRLMKQAEKFNRPIVCFIDTPGAYCGVEAEQRGQGEAIAKNLINMISLEVPIISIVIGEGGSGGALALSVSDKIWMLENAVYSLLSPEGFASILWRDSTKAKEAANIMKITSEDLKSYSLIDKILYEPDRDASKNVKVMSNIIKNNLIKEFNNLMDLDRDELLNKRYNKFRVIGEYKNKT</sequence>
<evidence type="ECO:0000250" key="1"/>
<evidence type="ECO:0000255" key="2"/>
<evidence type="ECO:0000255" key="3">
    <source>
        <dbReference type="PROSITE-ProRule" id="PRU01136"/>
    </source>
</evidence>
<evidence type="ECO:0000255" key="4">
    <source>
        <dbReference type="PROSITE-ProRule" id="PRU01137"/>
    </source>
</evidence>
<evidence type="ECO:0000255" key="5">
    <source>
        <dbReference type="PROSITE-ProRule" id="PRU01138"/>
    </source>
</evidence>
<evidence type="ECO:0000305" key="6"/>